<organism>
    <name type="scientific">Arabidopsis thaliana</name>
    <name type="common">Mouse-ear cress</name>
    <dbReference type="NCBI Taxonomy" id="3702"/>
    <lineage>
        <taxon>Eukaryota</taxon>
        <taxon>Viridiplantae</taxon>
        <taxon>Streptophyta</taxon>
        <taxon>Embryophyta</taxon>
        <taxon>Tracheophyta</taxon>
        <taxon>Spermatophyta</taxon>
        <taxon>Magnoliopsida</taxon>
        <taxon>eudicotyledons</taxon>
        <taxon>Gunneridae</taxon>
        <taxon>Pentapetalae</taxon>
        <taxon>rosids</taxon>
        <taxon>malvids</taxon>
        <taxon>Brassicales</taxon>
        <taxon>Brassicaceae</taxon>
        <taxon>Camelineae</taxon>
        <taxon>Arabidopsis</taxon>
    </lineage>
</organism>
<reference key="1">
    <citation type="journal article" date="2000" name="DNA Res.">
        <title>Structural analysis of Arabidopsis thaliana chromosome 3. II. Sequence features of the 4,251,695 bp regions covered by 90 P1, TAC and BAC clones.</title>
        <authorList>
            <person name="Kaneko T."/>
            <person name="Katoh T."/>
            <person name="Sato S."/>
            <person name="Nakamura Y."/>
            <person name="Asamizu E."/>
            <person name="Tabata S."/>
        </authorList>
    </citation>
    <scope>NUCLEOTIDE SEQUENCE [LARGE SCALE GENOMIC DNA]</scope>
    <source>
        <strain>cv. Columbia</strain>
    </source>
</reference>
<reference key="2">
    <citation type="journal article" date="2000" name="Nature">
        <title>Sequence and analysis of chromosome 3 of the plant Arabidopsis thaliana.</title>
        <authorList>
            <person name="Salanoubat M."/>
            <person name="Lemcke K."/>
            <person name="Rieger M."/>
            <person name="Ansorge W."/>
            <person name="Unseld M."/>
            <person name="Fartmann B."/>
            <person name="Valle G."/>
            <person name="Bloecker H."/>
            <person name="Perez-Alonso M."/>
            <person name="Obermaier B."/>
            <person name="Delseny M."/>
            <person name="Boutry M."/>
            <person name="Grivell L.A."/>
            <person name="Mache R."/>
            <person name="Puigdomenech P."/>
            <person name="De Simone V."/>
            <person name="Choisne N."/>
            <person name="Artiguenave F."/>
            <person name="Robert C."/>
            <person name="Brottier P."/>
            <person name="Wincker P."/>
            <person name="Cattolico L."/>
            <person name="Weissenbach J."/>
            <person name="Saurin W."/>
            <person name="Quetier F."/>
            <person name="Schaefer M."/>
            <person name="Mueller-Auer S."/>
            <person name="Gabel C."/>
            <person name="Fuchs M."/>
            <person name="Benes V."/>
            <person name="Wurmbach E."/>
            <person name="Drzonek H."/>
            <person name="Erfle H."/>
            <person name="Jordan N."/>
            <person name="Bangert S."/>
            <person name="Wiedelmann R."/>
            <person name="Kranz H."/>
            <person name="Voss H."/>
            <person name="Holland R."/>
            <person name="Brandt P."/>
            <person name="Nyakatura G."/>
            <person name="Vezzi A."/>
            <person name="D'Angelo M."/>
            <person name="Pallavicini A."/>
            <person name="Toppo S."/>
            <person name="Simionati B."/>
            <person name="Conrad A."/>
            <person name="Hornischer K."/>
            <person name="Kauer G."/>
            <person name="Loehnert T.-H."/>
            <person name="Nordsiek G."/>
            <person name="Reichelt J."/>
            <person name="Scharfe M."/>
            <person name="Schoen O."/>
            <person name="Bargues M."/>
            <person name="Terol J."/>
            <person name="Climent J."/>
            <person name="Navarro P."/>
            <person name="Collado C."/>
            <person name="Perez-Perez A."/>
            <person name="Ottenwaelder B."/>
            <person name="Duchemin D."/>
            <person name="Cooke R."/>
            <person name="Laudie M."/>
            <person name="Berger-Llauro C."/>
            <person name="Purnelle B."/>
            <person name="Masuy D."/>
            <person name="de Haan M."/>
            <person name="Maarse A.C."/>
            <person name="Alcaraz J.-P."/>
            <person name="Cottet A."/>
            <person name="Casacuberta E."/>
            <person name="Monfort A."/>
            <person name="Argiriou A."/>
            <person name="Flores M."/>
            <person name="Liguori R."/>
            <person name="Vitale D."/>
            <person name="Mannhaupt G."/>
            <person name="Haase D."/>
            <person name="Schoof H."/>
            <person name="Rudd S."/>
            <person name="Zaccaria P."/>
            <person name="Mewes H.-W."/>
            <person name="Mayer K.F.X."/>
            <person name="Kaul S."/>
            <person name="Town C.D."/>
            <person name="Koo H.L."/>
            <person name="Tallon L.J."/>
            <person name="Jenkins J."/>
            <person name="Rooney T."/>
            <person name="Rizzo M."/>
            <person name="Walts A."/>
            <person name="Utterback T."/>
            <person name="Fujii C.Y."/>
            <person name="Shea T.P."/>
            <person name="Creasy T.H."/>
            <person name="Haas B."/>
            <person name="Maiti R."/>
            <person name="Wu D."/>
            <person name="Peterson J."/>
            <person name="Van Aken S."/>
            <person name="Pai G."/>
            <person name="Militscher J."/>
            <person name="Sellers P."/>
            <person name="Gill J.E."/>
            <person name="Feldblyum T.V."/>
            <person name="Preuss D."/>
            <person name="Lin X."/>
            <person name="Nierman W.C."/>
            <person name="Salzberg S.L."/>
            <person name="White O."/>
            <person name="Venter J.C."/>
            <person name="Fraser C.M."/>
            <person name="Kaneko T."/>
            <person name="Nakamura Y."/>
            <person name="Sato S."/>
            <person name="Kato T."/>
            <person name="Asamizu E."/>
            <person name="Sasamoto S."/>
            <person name="Kimura T."/>
            <person name="Idesawa K."/>
            <person name="Kawashima K."/>
            <person name="Kishida Y."/>
            <person name="Kiyokawa C."/>
            <person name="Kohara M."/>
            <person name="Matsumoto M."/>
            <person name="Matsuno A."/>
            <person name="Muraki A."/>
            <person name="Nakayama S."/>
            <person name="Nakazaki N."/>
            <person name="Shinpo S."/>
            <person name="Takeuchi C."/>
            <person name="Wada T."/>
            <person name="Watanabe A."/>
            <person name="Yamada M."/>
            <person name="Yasuda M."/>
            <person name="Tabata S."/>
        </authorList>
    </citation>
    <scope>NUCLEOTIDE SEQUENCE [LARGE SCALE GENOMIC DNA]</scope>
    <source>
        <strain>cv. Columbia</strain>
    </source>
</reference>
<reference key="3">
    <citation type="journal article" date="2017" name="Plant J.">
        <title>Araport11: a complete reannotation of the Arabidopsis thaliana reference genome.</title>
        <authorList>
            <person name="Cheng C.Y."/>
            <person name="Krishnakumar V."/>
            <person name="Chan A.P."/>
            <person name="Thibaud-Nissen F."/>
            <person name="Schobel S."/>
            <person name="Town C.D."/>
        </authorList>
    </citation>
    <scope>GENOME REANNOTATION</scope>
    <source>
        <strain>cv. Columbia</strain>
    </source>
</reference>
<reference key="4">
    <citation type="journal article" date="2006" name="Plant Biotechnol. J.">
        <title>Simultaneous high-throughput recombinational cloning of open reading frames in closed and open configurations.</title>
        <authorList>
            <person name="Underwood B.A."/>
            <person name="Vanderhaeghen R."/>
            <person name="Whitford R."/>
            <person name="Town C.D."/>
            <person name="Hilson P."/>
        </authorList>
    </citation>
    <scope>NUCLEOTIDE SEQUENCE [LARGE SCALE MRNA]</scope>
    <source>
        <strain>cv. Columbia</strain>
    </source>
</reference>
<reference key="5">
    <citation type="journal article" date="2007" name="Plant J.">
        <title>Arabidopsis ESK1 encodes a novel regulator of freezing tolerance.</title>
        <authorList>
            <person name="Xin Z."/>
            <person name="Mandaokar A."/>
            <person name="Chen J."/>
            <person name="Last R.L."/>
            <person name="Browse J."/>
        </authorList>
    </citation>
    <scope>GENE FAMILY</scope>
    <source>
        <strain>cv. Columbia</strain>
    </source>
</reference>
<reference key="6">
    <citation type="journal article" date="2010" name="Plant Physiol.">
        <title>TRICHOME BIREFRINGENCE and its homolog AT5G01360 encode plant-specific DUF231 proteins required for cellulose biosynthesis in Arabidopsis.</title>
        <authorList>
            <person name="Bischoff V."/>
            <person name="Nita S."/>
            <person name="Neumetzler L."/>
            <person name="Schindelasch D."/>
            <person name="Urbain A."/>
            <person name="Eshed R."/>
            <person name="Persson S."/>
            <person name="Delmer D."/>
            <person name="Scheible W.R."/>
        </authorList>
    </citation>
    <scope>FUNCTION</scope>
    <scope>TISSUE SPECIFICITY</scope>
    <scope>GENE FAMILY</scope>
    <scope>NOMENCLATURE</scope>
</reference>
<reference key="7">
    <citation type="journal article" date="2010" name="Plant Signal. Behav.">
        <title>Involvement of TBL/DUF231 proteins into cell wall biology.</title>
        <authorList>
            <person name="Bischoff V."/>
            <person name="Selbig J."/>
            <person name="Scheible W.R."/>
        </authorList>
    </citation>
    <scope>3D-STRUCTURE MODELING</scope>
</reference>
<accession>Q9LHL6</accession>
<accession>A0MEV4</accession>
<name>TBL1_ARATH</name>
<feature type="chain" id="PRO_0000425367" description="Protein trichome birefringence-like 1">
    <location>
        <begin position="1"/>
        <end position="556"/>
    </location>
</feature>
<feature type="transmembrane region" description="Helical; Signal-anchor for type II membrane protein" evidence="3">
    <location>
        <begin position="38"/>
        <end position="58"/>
    </location>
</feature>
<feature type="short sequence motif" description="GDS motif">
    <location>
        <begin position="269"/>
        <end position="271"/>
    </location>
</feature>
<feature type="short sequence motif" description="DCXHWCLPGXXDXWN motif">
    <location>
        <begin position="514"/>
        <end position="528"/>
    </location>
</feature>
<keyword id="KW-0472">Membrane</keyword>
<keyword id="KW-1185">Reference proteome</keyword>
<keyword id="KW-0735">Signal-anchor</keyword>
<keyword id="KW-0812">Transmembrane</keyword>
<keyword id="KW-1133">Transmembrane helix</keyword>
<dbReference type="EMBL" id="AP002040">
    <property type="protein sequence ID" value="BAB03118.1"/>
    <property type="molecule type" value="Genomic_DNA"/>
</dbReference>
<dbReference type="EMBL" id="AC069473">
    <property type="protein sequence ID" value="AAG51057.1"/>
    <property type="molecule type" value="Genomic_DNA"/>
</dbReference>
<dbReference type="EMBL" id="CP002686">
    <property type="protein sequence ID" value="AEE75143.1"/>
    <property type="molecule type" value="Genomic_DNA"/>
</dbReference>
<dbReference type="EMBL" id="DQ446655">
    <property type="protein sequence ID" value="ABE65935.1"/>
    <property type="molecule type" value="mRNA"/>
</dbReference>
<dbReference type="EMBL" id="DQ653077">
    <property type="protein sequence ID" value="ABK28553.1"/>
    <property type="status" value="ALT_SEQ"/>
    <property type="molecule type" value="mRNA"/>
</dbReference>
<dbReference type="RefSeq" id="NP_187813.1">
    <property type="nucleotide sequence ID" value="NM_112040.2"/>
</dbReference>
<dbReference type="SMR" id="Q9LHL6"/>
<dbReference type="BioGRID" id="5714">
    <property type="interactions" value="2"/>
</dbReference>
<dbReference type="IntAct" id="Q9LHL6">
    <property type="interactions" value="2"/>
</dbReference>
<dbReference type="STRING" id="3702.Q9LHL6"/>
<dbReference type="iPTMnet" id="Q9LHL6"/>
<dbReference type="PaxDb" id="3702-AT3G12060.1"/>
<dbReference type="ProteomicsDB" id="233014"/>
<dbReference type="EnsemblPlants" id="AT3G12060.1">
    <property type="protein sequence ID" value="AT3G12060.1"/>
    <property type="gene ID" value="AT3G12060"/>
</dbReference>
<dbReference type="GeneID" id="820380"/>
<dbReference type="Gramene" id="AT3G12060.1">
    <property type="protein sequence ID" value="AT3G12060.1"/>
    <property type="gene ID" value="AT3G12060"/>
</dbReference>
<dbReference type="KEGG" id="ath:AT3G12060"/>
<dbReference type="Araport" id="AT3G12060"/>
<dbReference type="TAIR" id="AT3G12060">
    <property type="gene designation" value="TBL1"/>
</dbReference>
<dbReference type="eggNOG" id="ENOG502SHHV">
    <property type="taxonomic scope" value="Eukaryota"/>
</dbReference>
<dbReference type="HOGENOM" id="CLU_020953_5_1_1"/>
<dbReference type="InParanoid" id="Q9LHL6"/>
<dbReference type="OMA" id="ENISCPD"/>
<dbReference type="OrthoDB" id="630188at2759"/>
<dbReference type="PhylomeDB" id="Q9LHL6"/>
<dbReference type="PRO" id="PR:Q9LHL6"/>
<dbReference type="Proteomes" id="UP000006548">
    <property type="component" value="Chromosome 3"/>
</dbReference>
<dbReference type="ExpressionAtlas" id="Q9LHL6">
    <property type="expression patterns" value="baseline and differential"/>
</dbReference>
<dbReference type="GO" id="GO:0016020">
    <property type="term" value="C:membrane"/>
    <property type="evidence" value="ECO:0007669"/>
    <property type="project" value="UniProtKB-SubCell"/>
</dbReference>
<dbReference type="GO" id="GO:0016413">
    <property type="term" value="F:O-acetyltransferase activity"/>
    <property type="evidence" value="ECO:0007669"/>
    <property type="project" value="InterPro"/>
</dbReference>
<dbReference type="GO" id="GO:0030244">
    <property type="term" value="P:cellulose biosynthetic process"/>
    <property type="evidence" value="ECO:0000315"/>
    <property type="project" value="TAIR"/>
</dbReference>
<dbReference type="InterPro" id="IPR029962">
    <property type="entry name" value="TBL"/>
</dbReference>
<dbReference type="InterPro" id="IPR026057">
    <property type="entry name" value="TBL_C"/>
</dbReference>
<dbReference type="InterPro" id="IPR025846">
    <property type="entry name" value="TBL_N"/>
</dbReference>
<dbReference type="PANTHER" id="PTHR32285:SF164">
    <property type="entry name" value="PROTEIN TRICHOME BIREFRINGENCE-LIKE 1"/>
    <property type="match status" value="1"/>
</dbReference>
<dbReference type="PANTHER" id="PTHR32285">
    <property type="entry name" value="PROTEIN TRICHOME BIREFRINGENCE-LIKE 9-RELATED"/>
    <property type="match status" value="1"/>
</dbReference>
<dbReference type="Pfam" id="PF13839">
    <property type="entry name" value="PC-Esterase"/>
    <property type="match status" value="1"/>
</dbReference>
<dbReference type="Pfam" id="PF14416">
    <property type="entry name" value="PMR5N"/>
    <property type="match status" value="1"/>
</dbReference>
<comment type="function">
    <text evidence="1 2 4">Can complement TBR and is therefore functionally equivalent, but may work in different tissue (PubMed:20388664). May act as a bridging protein that binds pectin and other cell wall polysaccharides. Probably involved in maintaining esterification of pectins (By similarity). May be involved in the specific O-acetylation of cell wall polymers (By similarity).</text>
</comment>
<comment type="subcellular location">
    <subcellularLocation>
        <location evidence="5">Membrane</location>
        <topology evidence="5">Single-pass type II membrane protein</topology>
    </subcellularLocation>
</comment>
<comment type="tissue specificity">
    <text evidence="4">Not expressed in trichomes.</text>
</comment>
<comment type="miscellaneous">
    <text evidence="6">Contains 2 motifs that are conserved in esterases, but it is unlikely that this protein belongs to the catalytically active pectin esterases.</text>
</comment>
<comment type="similarity">
    <text evidence="5">Belongs to the PC-esterase family. TBL subfamily.</text>
</comment>
<comment type="sequence caution" evidence="5">
    <conflict type="erroneous termination">
        <sequence resource="EMBL-CDS" id="ABK28553"/>
    </conflict>
    <text>Extended C-terminus.</text>
</comment>
<gene>
    <name type="primary">TBL1</name>
    <name type="ordered locus">At3g12060</name>
    <name type="ORF">MEC18.19</name>
    <name type="ORF">T21B14.12</name>
</gene>
<protein>
    <recommendedName>
        <fullName>Protein trichome birefringence-like 1</fullName>
    </recommendedName>
</protein>
<evidence type="ECO:0000250" key="1">
    <source>
        <dbReference type="UniProtKB" id="Q9FG35"/>
    </source>
</evidence>
<evidence type="ECO:0000250" key="2">
    <source>
        <dbReference type="UniProtKB" id="Q9LY46"/>
    </source>
</evidence>
<evidence type="ECO:0000255" key="3"/>
<evidence type="ECO:0000269" key="4">
    <source>
    </source>
</evidence>
<evidence type="ECO:0000305" key="5"/>
<evidence type="ECO:0000305" key="6">
    <source>
    </source>
</evidence>
<proteinExistence type="evidence at transcript level"/>
<sequence length="556" mass="63005">MALDSVKHLPIHGVSAFSSVTVEIKSFFSTVKPRKTSTFVYAFVVTFVALTVFLAFSPSPITVALAPSISSYVLPNITVSNSSNSSPSSLDSNFTTLRTPAPENLTAVTKNLTFESPVANGTTDTNAKTITIQFQTGHAKENISCPDNKTARDLDTHGARKAPLSEVLAVNSTASPKRKQRRKSSLRKVIESLKSCEFFEGDWVKDDSYPLYKPGSCNLIDEQFNCISNGRPDVDFQKLKWKPKQCSLPRLNGGKLLEMIRGRRLVFVGDSLNRNMWESLVCILKGSVKDESQVFEAHGRHQFRWEAEYSFVFKDYNCTVEFFASPFLVQEWEVTEKNGTKKETLRLDLVGKSSEQYKGADILVFNTGHWWTHEKTSKGEDYYQEGSTVHPKLDVDEAFRKALTTWGRWVDKNVNPKKSLVFFRGYSPSHFSGGQWNAGGACDDETEPIKNETYLTPYMLKMEILERVLRGMKTPVTYLNITRLTDYRKDAHPSIYRKQKLSAEESKSPLLYQDCSHWCLPGVPDSWNEIFYAELLVKLDQLGGKRRRKALKDHRS</sequence>